<name>FB246_ARATH</name>
<protein>
    <recommendedName>
        <fullName>Putative F-box protein At4g22660</fullName>
    </recommendedName>
</protein>
<reference key="1">
    <citation type="journal article" date="1999" name="Nature">
        <title>Sequence and analysis of chromosome 4 of the plant Arabidopsis thaliana.</title>
        <authorList>
            <person name="Mayer K.F.X."/>
            <person name="Schueller C."/>
            <person name="Wambutt R."/>
            <person name="Murphy G."/>
            <person name="Volckaert G."/>
            <person name="Pohl T."/>
            <person name="Duesterhoeft A."/>
            <person name="Stiekema W."/>
            <person name="Entian K.-D."/>
            <person name="Terryn N."/>
            <person name="Harris B."/>
            <person name="Ansorge W."/>
            <person name="Brandt P."/>
            <person name="Grivell L.A."/>
            <person name="Rieger M."/>
            <person name="Weichselgartner M."/>
            <person name="de Simone V."/>
            <person name="Obermaier B."/>
            <person name="Mache R."/>
            <person name="Mueller M."/>
            <person name="Kreis M."/>
            <person name="Delseny M."/>
            <person name="Puigdomenech P."/>
            <person name="Watson M."/>
            <person name="Schmidtheini T."/>
            <person name="Reichert B."/>
            <person name="Portetelle D."/>
            <person name="Perez-Alonso M."/>
            <person name="Boutry M."/>
            <person name="Bancroft I."/>
            <person name="Vos P."/>
            <person name="Hoheisel J."/>
            <person name="Zimmermann W."/>
            <person name="Wedler H."/>
            <person name="Ridley P."/>
            <person name="Langham S.-A."/>
            <person name="McCullagh B."/>
            <person name="Bilham L."/>
            <person name="Robben J."/>
            <person name="van der Schueren J."/>
            <person name="Grymonprez B."/>
            <person name="Chuang Y.-J."/>
            <person name="Vandenbussche F."/>
            <person name="Braeken M."/>
            <person name="Weltjens I."/>
            <person name="Voet M."/>
            <person name="Bastiaens I."/>
            <person name="Aert R."/>
            <person name="Defoor E."/>
            <person name="Weitzenegger T."/>
            <person name="Bothe G."/>
            <person name="Ramsperger U."/>
            <person name="Hilbert H."/>
            <person name="Braun M."/>
            <person name="Holzer E."/>
            <person name="Brandt A."/>
            <person name="Peters S."/>
            <person name="van Staveren M."/>
            <person name="Dirkse W."/>
            <person name="Mooijman P."/>
            <person name="Klein Lankhorst R."/>
            <person name="Rose M."/>
            <person name="Hauf J."/>
            <person name="Koetter P."/>
            <person name="Berneiser S."/>
            <person name="Hempel S."/>
            <person name="Feldpausch M."/>
            <person name="Lamberth S."/>
            <person name="Van den Daele H."/>
            <person name="De Keyser A."/>
            <person name="Buysshaert C."/>
            <person name="Gielen J."/>
            <person name="Villarroel R."/>
            <person name="De Clercq R."/>
            <person name="van Montagu M."/>
            <person name="Rogers J."/>
            <person name="Cronin A."/>
            <person name="Quail M.A."/>
            <person name="Bray-Allen S."/>
            <person name="Clark L."/>
            <person name="Doggett J."/>
            <person name="Hall S."/>
            <person name="Kay M."/>
            <person name="Lennard N."/>
            <person name="McLay K."/>
            <person name="Mayes R."/>
            <person name="Pettett A."/>
            <person name="Rajandream M.A."/>
            <person name="Lyne M."/>
            <person name="Benes V."/>
            <person name="Rechmann S."/>
            <person name="Borkova D."/>
            <person name="Bloecker H."/>
            <person name="Scharfe M."/>
            <person name="Grimm M."/>
            <person name="Loehnert T.-H."/>
            <person name="Dose S."/>
            <person name="de Haan M."/>
            <person name="Maarse A.C."/>
            <person name="Schaefer M."/>
            <person name="Mueller-Auer S."/>
            <person name="Gabel C."/>
            <person name="Fuchs M."/>
            <person name="Fartmann B."/>
            <person name="Granderath K."/>
            <person name="Dauner D."/>
            <person name="Herzl A."/>
            <person name="Neumann S."/>
            <person name="Argiriou A."/>
            <person name="Vitale D."/>
            <person name="Liguori R."/>
            <person name="Piravandi E."/>
            <person name="Massenet O."/>
            <person name="Quigley F."/>
            <person name="Clabauld G."/>
            <person name="Muendlein A."/>
            <person name="Felber R."/>
            <person name="Schnabl S."/>
            <person name="Hiller R."/>
            <person name="Schmidt W."/>
            <person name="Lecharny A."/>
            <person name="Aubourg S."/>
            <person name="Chefdor F."/>
            <person name="Cooke R."/>
            <person name="Berger C."/>
            <person name="Monfort A."/>
            <person name="Casacuberta E."/>
            <person name="Gibbons T."/>
            <person name="Weber N."/>
            <person name="Vandenbol M."/>
            <person name="Bargues M."/>
            <person name="Terol J."/>
            <person name="Torres A."/>
            <person name="Perez-Perez A."/>
            <person name="Purnelle B."/>
            <person name="Bent E."/>
            <person name="Johnson S."/>
            <person name="Tacon D."/>
            <person name="Jesse T."/>
            <person name="Heijnen L."/>
            <person name="Schwarz S."/>
            <person name="Scholler P."/>
            <person name="Heber S."/>
            <person name="Francs P."/>
            <person name="Bielke C."/>
            <person name="Frishman D."/>
            <person name="Haase D."/>
            <person name="Lemcke K."/>
            <person name="Mewes H.-W."/>
            <person name="Stocker S."/>
            <person name="Zaccaria P."/>
            <person name="Bevan M."/>
            <person name="Wilson R.K."/>
            <person name="de la Bastide M."/>
            <person name="Habermann K."/>
            <person name="Parnell L."/>
            <person name="Dedhia N."/>
            <person name="Gnoj L."/>
            <person name="Schutz K."/>
            <person name="Huang E."/>
            <person name="Spiegel L."/>
            <person name="Sekhon M."/>
            <person name="Murray J."/>
            <person name="Sheet P."/>
            <person name="Cordes M."/>
            <person name="Abu-Threideh J."/>
            <person name="Stoneking T."/>
            <person name="Kalicki J."/>
            <person name="Graves T."/>
            <person name="Harmon G."/>
            <person name="Edwards J."/>
            <person name="Latreille P."/>
            <person name="Courtney L."/>
            <person name="Cloud J."/>
            <person name="Abbott A."/>
            <person name="Scott K."/>
            <person name="Johnson D."/>
            <person name="Minx P."/>
            <person name="Bentley D."/>
            <person name="Fulton B."/>
            <person name="Miller N."/>
            <person name="Greco T."/>
            <person name="Kemp K."/>
            <person name="Kramer J."/>
            <person name="Fulton L."/>
            <person name="Mardis E."/>
            <person name="Dante M."/>
            <person name="Pepin K."/>
            <person name="Hillier L.W."/>
            <person name="Nelson J."/>
            <person name="Spieth J."/>
            <person name="Ryan E."/>
            <person name="Andrews S."/>
            <person name="Geisel C."/>
            <person name="Layman D."/>
            <person name="Du H."/>
            <person name="Ali J."/>
            <person name="Berghoff A."/>
            <person name="Jones K."/>
            <person name="Drone K."/>
            <person name="Cotton M."/>
            <person name="Joshu C."/>
            <person name="Antonoiu B."/>
            <person name="Zidanic M."/>
            <person name="Strong C."/>
            <person name="Sun H."/>
            <person name="Lamar B."/>
            <person name="Yordan C."/>
            <person name="Ma P."/>
            <person name="Zhong J."/>
            <person name="Preston R."/>
            <person name="Vil D."/>
            <person name="Shekher M."/>
            <person name="Matero A."/>
            <person name="Shah R."/>
            <person name="Swaby I.K."/>
            <person name="O'Shaughnessy A."/>
            <person name="Rodriguez M."/>
            <person name="Hoffman J."/>
            <person name="Till S."/>
            <person name="Granat S."/>
            <person name="Shohdy N."/>
            <person name="Hasegawa A."/>
            <person name="Hameed A."/>
            <person name="Lodhi M."/>
            <person name="Johnson A."/>
            <person name="Chen E."/>
            <person name="Marra M.A."/>
            <person name="Martienssen R."/>
            <person name="McCombie W.R."/>
        </authorList>
    </citation>
    <scope>NUCLEOTIDE SEQUENCE [LARGE SCALE GENOMIC DNA]</scope>
    <source>
        <strain>cv. Columbia</strain>
    </source>
</reference>
<reference key="2">
    <citation type="journal article" date="2017" name="Plant J.">
        <title>Araport11: a complete reannotation of the Arabidopsis thaliana reference genome.</title>
        <authorList>
            <person name="Cheng C.Y."/>
            <person name="Krishnakumar V."/>
            <person name="Chan A.P."/>
            <person name="Thibaud-Nissen F."/>
            <person name="Schobel S."/>
            <person name="Town C.D."/>
        </authorList>
    </citation>
    <scope>GENOME REANNOTATION</scope>
    <source>
        <strain>cv. Columbia</strain>
    </source>
</reference>
<proteinExistence type="predicted"/>
<organism>
    <name type="scientific">Arabidopsis thaliana</name>
    <name type="common">Mouse-ear cress</name>
    <dbReference type="NCBI Taxonomy" id="3702"/>
    <lineage>
        <taxon>Eukaryota</taxon>
        <taxon>Viridiplantae</taxon>
        <taxon>Streptophyta</taxon>
        <taxon>Embryophyta</taxon>
        <taxon>Tracheophyta</taxon>
        <taxon>Spermatophyta</taxon>
        <taxon>Magnoliopsida</taxon>
        <taxon>eudicotyledons</taxon>
        <taxon>Gunneridae</taxon>
        <taxon>Pentapetalae</taxon>
        <taxon>rosids</taxon>
        <taxon>malvids</taxon>
        <taxon>Brassicales</taxon>
        <taxon>Brassicaceae</taxon>
        <taxon>Camelineae</taxon>
        <taxon>Arabidopsis</taxon>
    </lineage>
</organism>
<gene>
    <name type="ordered locus">At4g22660</name>
    <name type="ORF">T12H17.50</name>
</gene>
<keyword id="KW-1185">Reference proteome</keyword>
<sequence length="396" mass="46375">MEKNQNPNTWSDLPLDLLNLVFKRLSFANFRQAKSVCSSWYSASKQSVPKNQIPWLMLFPKDKNNNKNSSCTIFFNPEDKDQLYQTQDLGVEFAKSVCLATYGSWLLMQDSKYNLYILNPFTYEKIGLPAIESQQVGMVKVDQTIDDDFLTFDDHNHVKLFKGNNTVRTPVFWIDEKTKEYIALWGLGYWCVVYAKNGDKLWNQIPEIILDSLDMVYKDHKLYSFSYRNLFTILDFSGEIPRKAFQCFMHVYRSEWLSPRSRQLSNSWCVAETKLVVTVTGDVLLVERMLRHWSRIQSFNVYKFYSSGTFLDKYELADSLGDEAMLLDLGITVLANEVEGLHRNTIYFSDSHDTTTKDLFLFNYETREMEPLHKFDFDCSLLELSARWFLPSFSHT</sequence>
<feature type="chain" id="PRO_0000283513" description="Putative F-box protein At4g22660">
    <location>
        <begin position="1"/>
        <end position="396"/>
    </location>
</feature>
<feature type="domain" description="F-box">
    <location>
        <begin position="7"/>
        <end position="58"/>
    </location>
</feature>
<dbReference type="EMBL" id="AL021635">
    <property type="protein sequence ID" value="CAA16551.1"/>
    <property type="molecule type" value="Genomic_DNA"/>
</dbReference>
<dbReference type="EMBL" id="AL033545">
    <property type="protein sequence ID" value="CAA22171.1"/>
    <property type="molecule type" value="Genomic_DNA"/>
</dbReference>
<dbReference type="EMBL" id="AL161557">
    <property type="protein sequence ID" value="CAB79221.1"/>
    <property type="molecule type" value="Genomic_DNA"/>
</dbReference>
<dbReference type="EMBL" id="CP002687">
    <property type="protein sequence ID" value="AEE84635.1"/>
    <property type="molecule type" value="Genomic_DNA"/>
</dbReference>
<dbReference type="PIR" id="T04561">
    <property type="entry name" value="T04561"/>
</dbReference>
<dbReference type="RefSeq" id="NP_193997.1">
    <property type="nucleotide sequence ID" value="NM_118392.1"/>
</dbReference>
<dbReference type="BioGRID" id="13651">
    <property type="interactions" value="2"/>
</dbReference>
<dbReference type="FunCoup" id="O49647">
    <property type="interactions" value="31"/>
</dbReference>
<dbReference type="IntAct" id="O49647">
    <property type="interactions" value="2"/>
</dbReference>
<dbReference type="iPTMnet" id="O49647"/>
<dbReference type="PaxDb" id="3702-AT4G22660.1"/>
<dbReference type="DNASU" id="828362"/>
<dbReference type="EnsemblPlants" id="AT4G22660.1">
    <property type="protein sequence ID" value="AT4G22660.1"/>
    <property type="gene ID" value="AT4G22660"/>
</dbReference>
<dbReference type="GeneID" id="828362"/>
<dbReference type="Gramene" id="AT4G22660.1">
    <property type="protein sequence ID" value="AT4G22660.1"/>
    <property type="gene ID" value="AT4G22660"/>
</dbReference>
<dbReference type="KEGG" id="ath:AT4G22660"/>
<dbReference type="Araport" id="AT4G22660"/>
<dbReference type="TAIR" id="AT4G22660">
    <property type="gene designation" value="ATFDB33"/>
</dbReference>
<dbReference type="HOGENOM" id="CLU_019286_7_1_1"/>
<dbReference type="InParanoid" id="O49647"/>
<dbReference type="OMA" id="INNHWCK"/>
<dbReference type="PhylomeDB" id="O49647"/>
<dbReference type="PRO" id="PR:O49647"/>
<dbReference type="Proteomes" id="UP000006548">
    <property type="component" value="Chromosome 4"/>
</dbReference>
<dbReference type="ExpressionAtlas" id="O49647">
    <property type="expression patterns" value="baseline"/>
</dbReference>
<dbReference type="Gene3D" id="1.20.1280.50">
    <property type="match status" value="1"/>
</dbReference>
<dbReference type="InterPro" id="IPR036047">
    <property type="entry name" value="F-box-like_dom_sf"/>
</dbReference>
<dbReference type="InterPro" id="IPR050942">
    <property type="entry name" value="F-box_BR-signaling"/>
</dbReference>
<dbReference type="InterPro" id="IPR001810">
    <property type="entry name" value="F-box_dom"/>
</dbReference>
<dbReference type="InterPro" id="IPR005174">
    <property type="entry name" value="KIB1-4_b-propeller"/>
</dbReference>
<dbReference type="PANTHER" id="PTHR44259:SF26">
    <property type="entry name" value="F-BOX FAMILY PROTEIN-LIKE PROTEIN"/>
    <property type="match status" value="1"/>
</dbReference>
<dbReference type="PANTHER" id="PTHR44259">
    <property type="entry name" value="OS07G0183000 PROTEIN-RELATED"/>
    <property type="match status" value="1"/>
</dbReference>
<dbReference type="Pfam" id="PF03478">
    <property type="entry name" value="Beta-prop_KIB1-4"/>
    <property type="match status" value="1"/>
</dbReference>
<dbReference type="Pfam" id="PF00646">
    <property type="entry name" value="F-box"/>
    <property type="match status" value="1"/>
</dbReference>
<dbReference type="SMART" id="SM00256">
    <property type="entry name" value="FBOX"/>
    <property type="match status" value="1"/>
</dbReference>
<dbReference type="SUPFAM" id="SSF81383">
    <property type="entry name" value="F-box domain"/>
    <property type="match status" value="1"/>
</dbReference>
<accession>O49647</accession>